<sequence>MATQVEPLLPAGAPLLQAEEHGLARKKPAPDAQAESGPGDGGGEPDGGVRRPRPACARPGRDGAERESPRPPAAAEAPAGSDGEDGGRRDFVEAPPPKVNPWTKHAPPPAAVNGQPPPEPSAPAKVVRAAAPKPRKGSKVGDFGDAVNWPTPGEIAHKSVQPQSHKPQPARKLPPKKDMKEQEKGDGSDSKESPKTKSDESGEEKNGDEDCQRGGQKKKGSKHKWVPLQIDMKPEVPREKLASRPTRPQEPRHTPAVRGEMKGSEPATYMPVSVAPPTPAWQPETKVEPAWHDQDETSSVKSDGAGGARASFRGRGRGRGRGRGRGRGGTRTHFDYQFGYRKFDGTEGPRTHKYMNNITYYFDNVSSNEIYSMDQELLKDYIKRQIEYYFSVDNLERDFFLRRKMDADGFLPITLIASFHRVQALTTDISLIFAALKDSKVVEMVEEKVRRREEPEKWPLPGPPIVDYSQTDFSQLLNCPEFVPRQHYQKETESAPGSPRAVTPVPTKTEEVSNLKTLPKGLSASLPDLDSESWIEVKKRPRPSPARPKKPEEPRFSHPTALPQQLPSQQLMSKDQDEQEELDFLFDEEMEQMDGRKNTFTAWSEEDSDYEIDDRDVNKILIVTQTPPYMRRHPGGDRTGNHTSRAKMSAELAKVINDGLFYYEQDLWTEKFEPEYSQIKQEVENFKKVNMISREQFDTLTPEPPVDPNQEVPPGPPRFQQVPTDALANKLFGAPEPSTIARSLPTTVPESPNYRNARTPRTPRTPQLKDSSQTPRFYPVVKEGRTLDAKMPRKRKTRHSSNPPLESHVGWVMDSREHRPRTASISSSPSEGTPAVGSYGCTPQSLPKFQHPSHELLKENGFTQHVYHKYRRRCLNERKRLGIGQSQEMNTLFRFWSFFLRDHFNKKMYEEFKQLALEDAKEGYRYGLECLFRYYSYGLEKKFRLDIFKDFQEETVKDYEAGQLYGLEKFWAFLKYSKAKNLDIDPKLQEYLGKFRRLEDFRVDPPMGEEGNHKRHPVVAGGSGEGRKRCPSQSSSRPATGISQPPTTPTGQATREDAKWTSQHSDTLTLRK</sequence>
<proteinExistence type="evidence at protein level"/>
<name>LARP1_MOUSE</name>
<organism>
    <name type="scientific">Mus musculus</name>
    <name type="common">Mouse</name>
    <dbReference type="NCBI Taxonomy" id="10090"/>
    <lineage>
        <taxon>Eukaryota</taxon>
        <taxon>Metazoa</taxon>
        <taxon>Chordata</taxon>
        <taxon>Craniata</taxon>
        <taxon>Vertebrata</taxon>
        <taxon>Euteleostomi</taxon>
        <taxon>Mammalia</taxon>
        <taxon>Eutheria</taxon>
        <taxon>Euarchontoglires</taxon>
        <taxon>Glires</taxon>
        <taxon>Rodentia</taxon>
        <taxon>Myomorpha</taxon>
        <taxon>Muroidea</taxon>
        <taxon>Muridae</taxon>
        <taxon>Murinae</taxon>
        <taxon>Mus</taxon>
        <taxon>Mus</taxon>
    </lineage>
</organism>
<reference key="1">
    <citation type="journal article" date="2009" name="PLoS Biol.">
        <title>Lineage-specific biology revealed by a finished genome assembly of the mouse.</title>
        <authorList>
            <person name="Church D.M."/>
            <person name="Goodstadt L."/>
            <person name="Hillier L.W."/>
            <person name="Zody M.C."/>
            <person name="Goldstein S."/>
            <person name="She X."/>
            <person name="Bult C.J."/>
            <person name="Agarwala R."/>
            <person name="Cherry J.L."/>
            <person name="DiCuccio M."/>
            <person name="Hlavina W."/>
            <person name="Kapustin Y."/>
            <person name="Meric P."/>
            <person name="Maglott D."/>
            <person name="Birtle Z."/>
            <person name="Marques A.C."/>
            <person name="Graves T."/>
            <person name="Zhou S."/>
            <person name="Teague B."/>
            <person name="Potamousis K."/>
            <person name="Churas C."/>
            <person name="Place M."/>
            <person name="Herschleb J."/>
            <person name="Runnheim R."/>
            <person name="Forrest D."/>
            <person name="Amos-Landgraf J."/>
            <person name="Schwartz D.C."/>
            <person name="Cheng Z."/>
            <person name="Lindblad-Toh K."/>
            <person name="Eichler E.E."/>
            <person name="Ponting C.P."/>
        </authorList>
    </citation>
    <scope>NUCLEOTIDE SEQUENCE [LARGE SCALE GENOMIC DNA]</scope>
    <source>
        <strain>C57BL/6J</strain>
    </source>
</reference>
<reference key="2">
    <citation type="journal article" date="2004" name="Genome Res.">
        <title>The status, quality, and expansion of the NIH full-length cDNA project: the Mammalian Gene Collection (MGC).</title>
        <authorList>
            <consortium name="The MGC Project Team"/>
        </authorList>
    </citation>
    <scope>NUCLEOTIDE SEQUENCE [LARGE SCALE MRNA] (ISOFORM 2)</scope>
    <source>
        <tissue>Limb</tissue>
    </source>
</reference>
<reference key="3">
    <citation type="journal article" date="2003" name="DNA Res.">
        <title>Prediction of the coding sequences of mouse homologues of KIAA gene: III. The complete nucleotide sequences of 500 mouse KIAA-homologous cDNAs identified by screening of terminal sequences of cDNA clones randomly sampled from size-fractionated libraries.</title>
        <authorList>
            <person name="Okazaki N."/>
            <person name="Kikuno R."/>
            <person name="Ohara R."/>
            <person name="Inamoto S."/>
            <person name="Koseki H."/>
            <person name="Hiraoka S."/>
            <person name="Saga Y."/>
            <person name="Nagase T."/>
            <person name="Ohara O."/>
            <person name="Koga H."/>
        </authorList>
    </citation>
    <scope>NUCLEOTIDE SEQUENCE [LARGE SCALE MRNA] OF 709-1072 (ISOFORM 1)</scope>
    <source>
        <tissue>Embryonic tail</tissue>
    </source>
</reference>
<reference key="4">
    <citation type="journal article" date="2000" name="Dev. Dyn.">
        <title>dlarp, a new candidate Hox target in Drosophila whose orthologue in mouse is expressed at sites of epithelium/mesenchymal interactions.</title>
        <authorList>
            <person name="Chauvet S."/>
            <person name="Maurel-Zaffran C."/>
            <person name="Miassod R."/>
            <person name="Jullien N."/>
            <person name="Pradel J."/>
            <person name="Aragnol D."/>
        </authorList>
    </citation>
    <scope>DEVELOPMENTAL STAGE</scope>
    <scope>SUBCELLULAR LOCATION</scope>
</reference>
<reference key="5">
    <citation type="journal article" date="2007" name="Proc. Natl. Acad. Sci. U.S.A.">
        <title>Large-scale phosphorylation analysis of mouse liver.</title>
        <authorList>
            <person name="Villen J."/>
            <person name="Beausoleil S.A."/>
            <person name="Gerber S.A."/>
            <person name="Gygi S.P."/>
        </authorList>
    </citation>
    <scope>PHOSPHORYLATION [LARGE SCALE ANALYSIS] AT THR-503; SER-604; SER-608; THR-626 AND SER-751</scope>
    <scope>IDENTIFICATION BY MASS SPECTROMETRY [LARGE SCALE ANALYSIS]</scope>
    <source>
        <tissue>Liver</tissue>
    </source>
</reference>
<reference key="6">
    <citation type="journal article" date="2008" name="J. Proteome Res.">
        <title>Specific phosphopeptide enrichment with immobilized titanium ion affinity chromatography adsorbent for phosphoproteome analysis.</title>
        <authorList>
            <person name="Zhou H."/>
            <person name="Ye M."/>
            <person name="Dong J."/>
            <person name="Han G."/>
            <person name="Jiang X."/>
            <person name="Wu R."/>
            <person name="Zou H."/>
        </authorList>
    </citation>
    <scope>IDENTIFICATION BY MASS SPECTROMETRY [LARGE SCALE ANALYSIS]</scope>
    <source>
        <tissue>Liver</tissue>
    </source>
</reference>
<reference key="7">
    <citation type="journal article" date="2009" name="Immunity">
        <title>The phagosomal proteome in interferon-gamma-activated macrophages.</title>
        <authorList>
            <person name="Trost M."/>
            <person name="English L."/>
            <person name="Lemieux S."/>
            <person name="Courcelles M."/>
            <person name="Desjardins M."/>
            <person name="Thibault P."/>
        </authorList>
    </citation>
    <scope>PHOSPHORYLATION [LARGE SCALE ANALYSIS] AT THR-503; SER-604 AND SER-608</scope>
    <scope>IDENTIFICATION BY MASS SPECTROMETRY [LARGE SCALE ANALYSIS]</scope>
</reference>
<reference key="8">
    <citation type="journal article" date="2009" name="Mol. Cell. Proteomics">
        <title>Large scale localization of protein phosphorylation by use of electron capture dissociation mass spectrometry.</title>
        <authorList>
            <person name="Sweet S.M."/>
            <person name="Bailey C.M."/>
            <person name="Cunningham D.L."/>
            <person name="Heath J.K."/>
            <person name="Cooper H.J."/>
        </authorList>
    </citation>
    <scope>PHOSPHORYLATION [LARGE SCALE ANALYSIS] AT SER-299; SER-302; THR-503 AND SER-525</scope>
    <scope>IDENTIFICATION BY MASS SPECTROMETRY [LARGE SCALE ANALYSIS]</scope>
    <source>
        <tissue>Embryonic fibroblast</tissue>
    </source>
</reference>
<reference key="9">
    <citation type="journal article" date="2010" name="Cell">
        <title>A tissue-specific atlas of mouse protein phosphorylation and expression.</title>
        <authorList>
            <person name="Huttlin E.L."/>
            <person name="Jedrychowski M.P."/>
            <person name="Elias J.E."/>
            <person name="Goswami T."/>
            <person name="Rad R."/>
            <person name="Beausoleil S.A."/>
            <person name="Villen J."/>
            <person name="Haas W."/>
            <person name="Sowa M.E."/>
            <person name="Gygi S.P."/>
        </authorList>
    </citation>
    <scope>PHOSPHORYLATION [LARGE SCALE ANALYSIS] AT SER-68; SER-81; THR-196; SER-198; SER-201; SER-299; SER-302; THR-503; SER-525; SER-604; SER-608; THR-626; SER-743; SER-830; THR-842 AND SER-845</scope>
    <scope>IDENTIFICATION BY MASS SPECTROMETRY [LARGE SCALE ANALYSIS]</scope>
    <source>
        <tissue>Brain</tissue>
        <tissue>Brown adipose tissue</tissue>
        <tissue>Heart</tissue>
        <tissue>Kidney</tissue>
        <tissue>Liver</tissue>
        <tissue>Lung</tissue>
        <tissue>Pancreas</tissue>
        <tissue>Spleen</tissue>
        <tissue>Testis</tissue>
    </source>
</reference>
<reference key="10">
    <citation type="journal article" date="2014" name="Mol. Cell. Proteomics">
        <title>Immunoaffinity enrichment and mass spectrometry analysis of protein methylation.</title>
        <authorList>
            <person name="Guo A."/>
            <person name="Gu H."/>
            <person name="Zhou J."/>
            <person name="Mulhern D."/>
            <person name="Wang Y."/>
            <person name="Lee K.A."/>
            <person name="Yang V."/>
            <person name="Aguiar M."/>
            <person name="Kornhauser J."/>
            <person name="Jia X."/>
            <person name="Ren J."/>
            <person name="Beausoleil S.A."/>
            <person name="Silva J.C."/>
            <person name="Vemulapalli V."/>
            <person name="Bedford M.T."/>
            <person name="Comb M.J."/>
        </authorList>
    </citation>
    <scope>METHYLATION [LARGE SCALE ANALYSIS] AT ARG-213</scope>
    <scope>IDENTIFICATION BY MASS SPECTROMETRY [LARGE SCALE ANALYSIS]</scope>
    <source>
        <tissue>Brain</tissue>
    </source>
</reference>
<evidence type="ECO:0000250" key="1">
    <source>
        <dbReference type="UniProtKB" id="Q6PKG0"/>
    </source>
</evidence>
<evidence type="ECO:0000255" key="2">
    <source>
        <dbReference type="PROSITE-ProRule" id="PRU00332"/>
    </source>
</evidence>
<evidence type="ECO:0000256" key="3">
    <source>
        <dbReference type="SAM" id="MobiDB-lite"/>
    </source>
</evidence>
<evidence type="ECO:0000269" key="4">
    <source>
    </source>
</evidence>
<evidence type="ECO:0000303" key="5">
    <source>
    </source>
</evidence>
<evidence type="ECO:0000305" key="6"/>
<evidence type="ECO:0007744" key="7">
    <source>
    </source>
</evidence>
<evidence type="ECO:0007744" key="8">
    <source>
    </source>
</evidence>
<evidence type="ECO:0007744" key="9">
    <source>
    </source>
</evidence>
<evidence type="ECO:0007744" key="10">
    <source>
    </source>
</evidence>
<evidence type="ECO:0007744" key="11">
    <source>
    </source>
</evidence>
<protein>
    <recommendedName>
        <fullName>La-related protein 1</fullName>
    </recommendedName>
    <alternativeName>
        <fullName>La ribonucleoprotein domain family member 1</fullName>
    </alternativeName>
</protein>
<keyword id="KW-0007">Acetylation</keyword>
<keyword id="KW-0025">Alternative splicing</keyword>
<keyword id="KW-0963">Cytoplasm</keyword>
<keyword id="KW-1017">Isopeptide bond</keyword>
<keyword id="KW-0488">Methylation</keyword>
<keyword id="KW-0597">Phosphoprotein</keyword>
<keyword id="KW-1185">Reference proteome</keyword>
<keyword id="KW-0678">Repressor</keyword>
<keyword id="KW-0694">RNA-binding</keyword>
<keyword id="KW-0810">Translation regulation</keyword>
<keyword id="KW-0832">Ubl conjugation</keyword>
<comment type="function">
    <text evidence="1">RNA-binding protein that regulates the translation of specific target mRNA species downstream of the mTORC1 complex, in function of growth signals and nutrient availability. Interacts on the one hand with the 3' poly-A tails that are present in all mRNA molecules, and on the other hand with the 7-methylguanosine cap structure of mRNAs containing a 5' terminal oligopyrimidine (5'TOP) motif, which is present in mRNAs encoding ribosomal proteins and several components of the translation machinery. The interaction with the 5' end of mRNAs containing a 5'TOP motif leads to translational repression by preventing the binding of EIF4G1. When mTORC1 is activated, LARP1 is phosphorylated and dissociates from the 5' untranslated region (UTR) of mRNA. Does not prevent binding of EIF4G1 to mRNAs that lack a 5'TOP motif. Interacts with the free 40S ribosome subunit and with ribosomes, both monosomes and polysomes. Under normal nutrient availability, interacts primarily with the 3' untranslated region (UTR) of mRNAs encoding ribosomal proteins and increases protein synthesis. Associates with actively translating ribosomes and stimulates translation of mRNAs containing a 5'TOP motif, thereby regulating protein synthesis, and as a consequence, cell growth and proliferation. Stabilizes mRNAs species with a 5'TOP motif, which is required to prevent apoptosis.</text>
</comment>
<comment type="subunit">
    <text evidence="1">Interacts with PABPC1/PABP. Interacts with EIF4A1. Interacts with RPTOR. Recruited to the active mTORC1 complex via interaction with RPTOR. Inhibition of mTORC1 activity strongly reduces interaction with RPTOR and the mTORC1 complex. Identified in a complex with mRNA, PABPC1, EIF4E and EIF4G1. Found in a complex with PABPC1 and SHFL.</text>
</comment>
<comment type="subcellular location">
    <subcellularLocation>
        <location evidence="4">Cytoplasm</location>
    </subcellularLocation>
    <subcellularLocation>
        <location evidence="1">Cytoplasmic granule</location>
    </subcellularLocation>
    <text evidence="1">Colocalizes with RPTOR and PABPC1 in cytoplasmic granules that resemble stress granules.</text>
</comment>
<comment type="alternative products">
    <event type="alternative splicing"/>
    <isoform>
        <id>Q6ZQ58-1</id>
        <name>1</name>
        <sequence type="displayed"/>
    </isoform>
    <isoform>
        <id>Q6ZQ58-2</id>
        <name>2</name>
        <sequence type="described" ref="VSP_015116"/>
    </isoform>
</comment>
<comment type="developmental stage">
    <text evidence="4">At 10.5 dpc, expressed in dorsal root ganglia, spinal cord, and branchial arches. At 14.5 dpc, expressed in olfactory epithelium and cranial sensory ganglia. Also expressed in salivary glands, lungs, gut, kidney, teeth and vibrissae.</text>
</comment>
<comment type="domain">
    <text evidence="1">The C-terminal region mediates interaction with the mRNA and polysomes. It is required for translational repression of mRNAs with a 5'TOP motif.</text>
</comment>
<comment type="domain">
    <text evidence="1">The N-terminal region mediates interaction with PABPC1.</text>
</comment>
<comment type="PTM">
    <text evidence="1">Phosphorylated on multiple Ser and Thr residues in response to active mTORC1. Phosphorylation is important for interaction with RPTOR and the mTORC1 complex. Phosphorylation promotes dissociation from the 5'UTR of mRNA molecules with a 5'TOP motif.</text>
</comment>
<comment type="similarity">
    <text evidence="6">Belongs to the LARP family.</text>
</comment>
<comment type="caution">
    <text evidence="1">Conflicting results are reported regarding the interaction with PABPC1. Some studies found that the interaction depends on the presence of mRNA; others found that the interaction is direct and does not depend on the presence of mRNA.</text>
</comment>
<accession>Q6ZQ58</accession>
<accession>A2AFQ8</accession>
<accession>J3QNB1</accession>
<accession>Q7TSF7</accession>
<feature type="initiator methionine" description="Removed" evidence="1">
    <location>
        <position position="1"/>
    </location>
</feature>
<feature type="chain" id="PRO_0000207610" description="La-related protein 1">
    <location>
        <begin position="2"/>
        <end position="1072"/>
    </location>
</feature>
<feature type="domain" description="HTH La-type RNA-binding" evidence="2">
    <location>
        <begin position="372"/>
        <end position="462"/>
    </location>
</feature>
<feature type="region of interest" description="Disordered" evidence="3">
    <location>
        <begin position="1"/>
        <end position="268"/>
    </location>
</feature>
<feature type="region of interest" description="Required for interaction with PABPC1" evidence="1">
    <location>
        <begin position="70"/>
        <end position="550"/>
    </location>
</feature>
<feature type="region of interest" description="Disordered" evidence="3">
    <location>
        <begin position="289"/>
        <end position="331"/>
    </location>
</feature>
<feature type="region of interest" description="Disordered" evidence="3">
    <location>
        <begin position="488"/>
        <end position="578"/>
    </location>
</feature>
<feature type="region of interest" description="Required for interaction with RPTOR and for repression of mRNAs with a 5'TOP motif" evidence="1">
    <location>
        <begin position="551"/>
        <end position="1072"/>
    </location>
</feature>
<feature type="region of interest" description="Disordered" evidence="3">
    <location>
        <begin position="737"/>
        <end position="773"/>
    </location>
</feature>
<feature type="region of interest" description="Disordered" evidence="3">
    <location>
        <begin position="790"/>
        <end position="837"/>
    </location>
</feature>
<feature type="region of interest" description="Interaction with mRNA" evidence="1">
    <location>
        <begin position="850"/>
        <end position="1000"/>
    </location>
</feature>
<feature type="region of interest" description="Interaction with 7-methylguanosine mRNA cap structure" evidence="1">
    <location>
        <begin position="933"/>
        <end position="976"/>
    </location>
</feature>
<feature type="region of interest" description="Disordered" evidence="3">
    <location>
        <begin position="1003"/>
        <end position="1072"/>
    </location>
</feature>
<feature type="compositionally biased region" description="Low complexity" evidence="3">
    <location>
        <begin position="1"/>
        <end position="17"/>
    </location>
</feature>
<feature type="compositionally biased region" description="Basic and acidic residues" evidence="3">
    <location>
        <begin position="59"/>
        <end position="69"/>
    </location>
</feature>
<feature type="compositionally biased region" description="Pro residues" evidence="3">
    <location>
        <begin position="106"/>
        <end position="121"/>
    </location>
</feature>
<feature type="compositionally biased region" description="Low complexity" evidence="3">
    <location>
        <begin position="122"/>
        <end position="132"/>
    </location>
</feature>
<feature type="compositionally biased region" description="Basic and acidic residues" evidence="3">
    <location>
        <begin position="175"/>
        <end position="212"/>
    </location>
</feature>
<feature type="compositionally biased region" description="Basic residues" evidence="3">
    <location>
        <begin position="215"/>
        <end position="225"/>
    </location>
</feature>
<feature type="compositionally biased region" description="Basic and acidic residues" evidence="3">
    <location>
        <begin position="232"/>
        <end position="263"/>
    </location>
</feature>
<feature type="compositionally biased region" description="Basic residues" evidence="3">
    <location>
        <begin position="312"/>
        <end position="330"/>
    </location>
</feature>
<feature type="compositionally biased region" description="Low complexity" evidence="3">
    <location>
        <begin position="562"/>
        <end position="571"/>
    </location>
</feature>
<feature type="compositionally biased region" description="Polar residues" evidence="3">
    <location>
        <begin position="740"/>
        <end position="756"/>
    </location>
</feature>
<feature type="compositionally biased region" description="Polar residues" evidence="3">
    <location>
        <begin position="1031"/>
        <end position="1053"/>
    </location>
</feature>
<feature type="compositionally biased region" description="Polar residues" evidence="3">
    <location>
        <begin position="1060"/>
        <end position="1072"/>
    </location>
</feature>
<feature type="modified residue" description="N-acetylalanine" evidence="1">
    <location>
        <position position="2"/>
    </location>
</feature>
<feature type="modified residue" description="Phosphoserine" evidence="10">
    <location>
        <position position="68"/>
    </location>
</feature>
<feature type="modified residue" description="Phosphoserine" evidence="10">
    <location>
        <position position="81"/>
    </location>
</feature>
<feature type="modified residue" description="Phosphoserine" evidence="1">
    <location>
        <position position="138"/>
    </location>
</feature>
<feature type="modified residue" description="Phosphoserine" evidence="1">
    <location>
        <position position="188"/>
    </location>
</feature>
<feature type="modified residue" description="Phosphoserine" evidence="1">
    <location>
        <position position="193"/>
    </location>
</feature>
<feature type="modified residue" description="Phosphothreonine" evidence="10">
    <location>
        <position position="196"/>
    </location>
</feature>
<feature type="modified residue" description="Phosphoserine" evidence="10">
    <location>
        <position position="198"/>
    </location>
</feature>
<feature type="modified residue" description="Phosphoserine" evidence="10">
    <location>
        <position position="201"/>
    </location>
</feature>
<feature type="modified residue" description="Omega-N-methylarginine" evidence="11">
    <location>
        <position position="213"/>
    </location>
</feature>
<feature type="modified residue" description="Phosphoserine" evidence="8 10">
    <location>
        <position position="299"/>
    </location>
</feature>
<feature type="modified residue" description="Phosphoserine" evidence="8 10">
    <location>
        <position position="302"/>
    </location>
</feature>
<feature type="modified residue" description="Phosphothreonine" evidence="1">
    <location>
        <position position="351"/>
    </location>
</feature>
<feature type="modified residue" description="Phosphoserine" evidence="1">
    <location>
        <position position="494"/>
    </location>
</feature>
<feature type="modified residue" description="Phosphoserine" evidence="1">
    <location>
        <position position="498"/>
    </location>
</feature>
<feature type="modified residue" description="Phosphothreonine" evidence="7 8 9 10">
    <location>
        <position position="503"/>
    </location>
</feature>
<feature type="modified residue" description="Phosphoserine" evidence="8 10">
    <location>
        <position position="525"/>
    </location>
</feature>
<feature type="modified residue" description="Phosphoserine" evidence="1">
    <location>
        <position position="568"/>
    </location>
</feature>
<feature type="modified residue" description="Phosphoserine" evidence="7 9 10">
    <location>
        <position position="604"/>
    </location>
</feature>
<feature type="modified residue" description="Phosphoserine" evidence="7 9 10">
    <location>
        <position position="608"/>
    </location>
</feature>
<feature type="modified residue" description="Phosphothreonine" evidence="7 10">
    <location>
        <position position="626"/>
    </location>
</feature>
<feature type="modified residue" description="Phosphothreonine" evidence="1">
    <location>
        <position position="701"/>
    </location>
</feature>
<feature type="modified residue" description="Phosphoserine" evidence="10">
    <location>
        <position position="743"/>
    </location>
</feature>
<feature type="modified residue" description="Phosphothreonine" evidence="1">
    <location>
        <position position="746"/>
    </location>
</feature>
<feature type="modified residue" description="Phosphothreonine" evidence="1">
    <location>
        <position position="747"/>
    </location>
</feature>
<feature type="modified residue" description="Phosphoserine" evidence="7">
    <location>
        <position position="751"/>
    </location>
</feature>
<feature type="modified residue" description="Phosphotyrosine" evidence="1">
    <location>
        <position position="754"/>
    </location>
</feature>
<feature type="modified residue" description="Phosphothreonine" evidence="1">
    <location>
        <position position="759"/>
    </location>
</feature>
<feature type="modified residue" description="Phosphothreonine" evidence="1">
    <location>
        <position position="762"/>
    </location>
</feature>
<feature type="modified residue" description="Phosphothreonine" evidence="1">
    <location>
        <position position="765"/>
    </location>
</feature>
<feature type="modified residue" description="Phosphothreonine" evidence="1">
    <location>
        <position position="774"/>
    </location>
</feature>
<feature type="modified residue" description="Phosphoserine" evidence="1">
    <location>
        <position position="801"/>
    </location>
</feature>
<feature type="modified residue" description="Phosphothreonine" evidence="1">
    <location>
        <position position="822"/>
    </location>
</feature>
<feature type="modified residue" description="Phosphoserine" evidence="1">
    <location>
        <position position="824"/>
    </location>
</feature>
<feature type="modified residue" description="Phosphoserine" evidence="1">
    <location>
        <position position="828"/>
    </location>
</feature>
<feature type="modified residue" description="Phosphoserine" evidence="10">
    <location>
        <position position="830"/>
    </location>
</feature>
<feature type="modified residue" description="Phosphoserine" evidence="1">
    <location>
        <position position="838"/>
    </location>
</feature>
<feature type="modified residue" description="Phosphothreonine" evidence="10">
    <location>
        <position position="842"/>
    </location>
</feature>
<feature type="modified residue" description="Phosphoserine" evidence="10">
    <location>
        <position position="845"/>
    </location>
</feature>
<feature type="modified residue" description="N6-acetyllysine" evidence="1">
    <location>
        <position position="869"/>
    </location>
</feature>
<feature type="modified residue" description="N6-acetyllysine" evidence="1">
    <location>
        <position position="994"/>
    </location>
</feature>
<feature type="modified residue" description="Phosphoserine" evidence="1">
    <location>
        <position position="1034"/>
    </location>
</feature>
<feature type="modified residue" description="Phosphoserine" evidence="1">
    <location>
        <position position="1065"/>
    </location>
</feature>
<feature type="cross-link" description="Glycyl lysine isopeptide (Lys-Gly) (interchain with G-Cter in SUMO2)" evidence="1">
    <location>
        <position position="233"/>
    </location>
</feature>
<feature type="cross-link" description="Glycyl lysine isopeptide (Lys-Gly) (interchain with G-Cter in SUMO2)" evidence="1">
    <location>
        <position position="286"/>
    </location>
</feature>
<feature type="cross-link" description="Glycyl lysine isopeptide (Lys-Gly) (interchain with G-Cter in SUMO2)" evidence="1">
    <location>
        <position position="508"/>
    </location>
</feature>
<feature type="cross-link" description="Glycyl lysine isopeptide (Lys-Gly) (interchain with G-Cter in SUMO2)" evidence="1">
    <location>
        <position position="680"/>
    </location>
</feature>
<feature type="splice variant" id="VSP_015116" description="In isoform 2." evidence="5">
    <location>
        <begin position="1"/>
        <end position="1006"/>
    </location>
</feature>
<gene>
    <name type="primary">Larp1</name>
    <name type="synonym">Kiaa0731</name>
    <name type="synonym">Larp</name>
</gene>
<dbReference type="EMBL" id="AL672182">
    <property type="status" value="NOT_ANNOTATED_CDS"/>
    <property type="molecule type" value="Genomic_DNA"/>
</dbReference>
<dbReference type="EMBL" id="BC053449">
    <property type="protein sequence ID" value="AAH53449.1"/>
    <property type="molecule type" value="mRNA"/>
</dbReference>
<dbReference type="EMBL" id="AK129202">
    <property type="protein sequence ID" value="BAC98012.1"/>
    <property type="molecule type" value="mRNA"/>
</dbReference>
<dbReference type="CCDS" id="CCDS56771.1">
    <molecule id="Q6ZQ58-1"/>
</dbReference>
<dbReference type="RefSeq" id="NP_082727.1">
    <molecule id="Q6ZQ58-1"/>
    <property type="nucleotide sequence ID" value="NM_028451.1"/>
</dbReference>
<dbReference type="SMR" id="Q6ZQ58"/>
<dbReference type="BioGRID" id="215803">
    <property type="interactions" value="34"/>
</dbReference>
<dbReference type="FunCoup" id="Q6ZQ58">
    <property type="interactions" value="1976"/>
</dbReference>
<dbReference type="IntAct" id="Q6ZQ58">
    <property type="interactions" value="4"/>
</dbReference>
<dbReference type="MINT" id="Q6ZQ58"/>
<dbReference type="STRING" id="10090.ENSMUSP00000136673"/>
<dbReference type="ChEMBL" id="CHEMBL4879482"/>
<dbReference type="GlyGen" id="Q6ZQ58">
    <property type="glycosylation" value="6 sites, 1 O-linked glycan (2 sites)"/>
</dbReference>
<dbReference type="iPTMnet" id="Q6ZQ58"/>
<dbReference type="PhosphoSitePlus" id="Q6ZQ58"/>
<dbReference type="SwissPalm" id="Q6ZQ58"/>
<dbReference type="jPOST" id="Q6ZQ58"/>
<dbReference type="PaxDb" id="10090-ENSMUSP00000136673"/>
<dbReference type="PeptideAtlas" id="Q6ZQ58"/>
<dbReference type="ProteomicsDB" id="264836">
    <molecule id="Q6ZQ58-1"/>
</dbReference>
<dbReference type="ProteomicsDB" id="264837">
    <molecule id="Q6ZQ58-2"/>
</dbReference>
<dbReference type="Pumba" id="Q6ZQ58"/>
<dbReference type="Antibodypedia" id="28316">
    <property type="antibodies" value="145 antibodies from 27 providers"/>
</dbReference>
<dbReference type="Ensembl" id="ENSMUST00000178636.2">
    <molecule id="Q6ZQ58-1"/>
    <property type="protein sequence ID" value="ENSMUSP00000136673.2"/>
    <property type="gene ID" value="ENSMUSG00000037331.16"/>
</dbReference>
<dbReference type="GeneID" id="73158"/>
<dbReference type="KEGG" id="mmu:73158"/>
<dbReference type="UCSC" id="uc007jah.2">
    <molecule id="Q6ZQ58-1"/>
    <property type="organism name" value="mouse"/>
</dbReference>
<dbReference type="AGR" id="MGI:1890165"/>
<dbReference type="CTD" id="23367"/>
<dbReference type="MGI" id="MGI:1890165">
    <property type="gene designation" value="Larp1"/>
</dbReference>
<dbReference type="VEuPathDB" id="HostDB:ENSMUSG00000037331"/>
<dbReference type="eggNOG" id="KOG2590">
    <property type="taxonomic scope" value="Eukaryota"/>
</dbReference>
<dbReference type="GeneTree" id="ENSGT00940000159577"/>
<dbReference type="InParanoid" id="Q6ZQ58"/>
<dbReference type="OMA" id="NHKRHPA"/>
<dbReference type="OrthoDB" id="340227at2759"/>
<dbReference type="TreeFam" id="TF314516"/>
<dbReference type="BioGRID-ORCS" id="73158">
    <property type="hits" value="8 hits in 76 CRISPR screens"/>
</dbReference>
<dbReference type="ChiTaRS" id="Larp1">
    <property type="organism name" value="mouse"/>
</dbReference>
<dbReference type="PRO" id="PR:Q6ZQ58"/>
<dbReference type="Proteomes" id="UP000000589">
    <property type="component" value="Chromosome 11"/>
</dbReference>
<dbReference type="RNAct" id="Q6ZQ58">
    <property type="molecule type" value="protein"/>
</dbReference>
<dbReference type="Bgee" id="ENSMUSG00000037331">
    <property type="expression patterns" value="Expressed in primitive streak and 284 other cell types or tissues"/>
</dbReference>
<dbReference type="ExpressionAtlas" id="Q6ZQ58">
    <property type="expression patterns" value="baseline and differential"/>
</dbReference>
<dbReference type="GO" id="GO:0005737">
    <property type="term" value="C:cytoplasm"/>
    <property type="evidence" value="ECO:0000250"/>
    <property type="project" value="UniProtKB"/>
</dbReference>
<dbReference type="GO" id="GO:0010494">
    <property type="term" value="C:cytoplasmic stress granule"/>
    <property type="evidence" value="ECO:0000250"/>
    <property type="project" value="UniProtKB"/>
</dbReference>
<dbReference type="GO" id="GO:0031931">
    <property type="term" value="C:TORC1 complex"/>
    <property type="evidence" value="ECO:0007669"/>
    <property type="project" value="Ensembl"/>
</dbReference>
<dbReference type="GO" id="GO:0008190">
    <property type="term" value="F:eukaryotic initiation factor 4E binding"/>
    <property type="evidence" value="ECO:0000250"/>
    <property type="project" value="UniProtKB"/>
</dbReference>
<dbReference type="GO" id="GO:0003730">
    <property type="term" value="F:mRNA 3'-UTR binding"/>
    <property type="evidence" value="ECO:0000250"/>
    <property type="project" value="UniProtKB"/>
</dbReference>
<dbReference type="GO" id="GO:0048027">
    <property type="term" value="F:mRNA 5'-UTR binding"/>
    <property type="evidence" value="ECO:0000250"/>
    <property type="project" value="UniProtKB"/>
</dbReference>
<dbReference type="GO" id="GO:0043024">
    <property type="term" value="F:ribosomal small subunit binding"/>
    <property type="evidence" value="ECO:0000250"/>
    <property type="project" value="UniProtKB"/>
</dbReference>
<dbReference type="GO" id="GO:0000340">
    <property type="term" value="F:RNA 7-methylguanosine cap binding"/>
    <property type="evidence" value="ECO:0000250"/>
    <property type="project" value="UniProtKB"/>
</dbReference>
<dbReference type="GO" id="GO:0000339">
    <property type="term" value="F:RNA cap binding"/>
    <property type="evidence" value="ECO:0000250"/>
    <property type="project" value="UniProtKB"/>
</dbReference>
<dbReference type="GO" id="GO:0008494">
    <property type="term" value="F:translation activator activity"/>
    <property type="evidence" value="ECO:0000250"/>
    <property type="project" value="UniProtKB"/>
</dbReference>
<dbReference type="GO" id="GO:0031369">
    <property type="term" value="F:translation initiation factor binding"/>
    <property type="evidence" value="ECO:0000250"/>
    <property type="project" value="UniProtKB"/>
</dbReference>
<dbReference type="GO" id="GO:0008283">
    <property type="term" value="P:cell population proliferation"/>
    <property type="evidence" value="ECO:0000250"/>
    <property type="project" value="UniProtKB"/>
</dbReference>
<dbReference type="GO" id="GO:0072752">
    <property type="term" value="P:cellular response to rapamycin"/>
    <property type="evidence" value="ECO:0000250"/>
    <property type="project" value="UniProtKB"/>
</dbReference>
<dbReference type="GO" id="GO:0048255">
    <property type="term" value="P:mRNA stabilization"/>
    <property type="evidence" value="ECO:0000250"/>
    <property type="project" value="UniProtKB"/>
</dbReference>
<dbReference type="GO" id="GO:0017148">
    <property type="term" value="P:negative regulation of translation"/>
    <property type="evidence" value="ECO:0000250"/>
    <property type="project" value="UniProtKB"/>
</dbReference>
<dbReference type="GO" id="GO:0045947">
    <property type="term" value="P:negative regulation of translational initiation"/>
    <property type="evidence" value="ECO:0000250"/>
    <property type="project" value="UniProtKB"/>
</dbReference>
<dbReference type="GO" id="GO:0016239">
    <property type="term" value="P:positive regulation of macroautophagy"/>
    <property type="evidence" value="ECO:0007669"/>
    <property type="project" value="Ensembl"/>
</dbReference>
<dbReference type="GO" id="GO:0045948">
    <property type="term" value="P:positive regulation of translational initiation"/>
    <property type="evidence" value="ECO:0007669"/>
    <property type="project" value="Ensembl"/>
</dbReference>
<dbReference type="GO" id="GO:0045070">
    <property type="term" value="P:positive regulation of viral genome replication"/>
    <property type="evidence" value="ECO:0007669"/>
    <property type="project" value="Ensembl"/>
</dbReference>
<dbReference type="GO" id="GO:1990928">
    <property type="term" value="P:response to amino acid starvation"/>
    <property type="evidence" value="ECO:0000250"/>
    <property type="project" value="UniProtKB"/>
</dbReference>
<dbReference type="GO" id="GO:0031929">
    <property type="term" value="P:TOR signaling"/>
    <property type="evidence" value="ECO:0000250"/>
    <property type="project" value="UniProtKB"/>
</dbReference>
<dbReference type="GO" id="GO:0038202">
    <property type="term" value="P:TORC1 signaling"/>
    <property type="evidence" value="ECO:0000250"/>
    <property type="project" value="UniProtKB"/>
</dbReference>
<dbReference type="GO" id="GO:0006413">
    <property type="term" value="P:translational initiation"/>
    <property type="evidence" value="ECO:0000250"/>
    <property type="project" value="UniProtKB"/>
</dbReference>
<dbReference type="CDD" id="cd08034">
    <property type="entry name" value="LARP_1_2"/>
    <property type="match status" value="1"/>
</dbReference>
<dbReference type="FunFam" id="1.10.10.10:FF:000131">
    <property type="entry name" value="la-related protein 1B isoform X2"/>
    <property type="match status" value="1"/>
</dbReference>
<dbReference type="Gene3D" id="1.10.10.10">
    <property type="entry name" value="Winged helix-like DNA-binding domain superfamily/Winged helix DNA-binding domain"/>
    <property type="match status" value="1"/>
</dbReference>
<dbReference type="InterPro" id="IPR006607">
    <property type="entry name" value="DM15"/>
</dbReference>
<dbReference type="InterPro" id="IPR045180">
    <property type="entry name" value="La_dom_prot"/>
</dbReference>
<dbReference type="InterPro" id="IPR006630">
    <property type="entry name" value="La_HTH"/>
</dbReference>
<dbReference type="InterPro" id="IPR036388">
    <property type="entry name" value="WH-like_DNA-bd_sf"/>
</dbReference>
<dbReference type="InterPro" id="IPR036390">
    <property type="entry name" value="WH_DNA-bd_sf"/>
</dbReference>
<dbReference type="PANTHER" id="PTHR22792:SF51">
    <property type="entry name" value="LA-RELATED PROTEIN 1"/>
    <property type="match status" value="1"/>
</dbReference>
<dbReference type="PANTHER" id="PTHR22792">
    <property type="entry name" value="LUPUS LA PROTEIN-RELATED"/>
    <property type="match status" value="1"/>
</dbReference>
<dbReference type="Pfam" id="PF05383">
    <property type="entry name" value="La"/>
    <property type="match status" value="1"/>
</dbReference>
<dbReference type="Pfam" id="PF21071">
    <property type="entry name" value="LARP1_HEAT"/>
    <property type="match status" value="1"/>
</dbReference>
<dbReference type="SMART" id="SM00684">
    <property type="entry name" value="DM15"/>
    <property type="match status" value="3"/>
</dbReference>
<dbReference type="SMART" id="SM00715">
    <property type="entry name" value="LA"/>
    <property type="match status" value="1"/>
</dbReference>
<dbReference type="SUPFAM" id="SSF46785">
    <property type="entry name" value="Winged helix' DNA-binding domain"/>
    <property type="match status" value="1"/>
</dbReference>
<dbReference type="PROSITE" id="PS50961">
    <property type="entry name" value="HTH_LA"/>
    <property type="match status" value="1"/>
</dbReference>